<evidence type="ECO:0000250" key="1"/>
<evidence type="ECO:0000269" key="2">
    <source>
    </source>
</evidence>
<keyword id="KW-0963">Cytoplasm</keyword>
<keyword id="KW-0539">Nucleus</keyword>
<keyword id="KW-1185">Reference proteome</keyword>
<keyword id="KW-0690">Ribosome biogenesis</keyword>
<keyword id="KW-0698">rRNA processing</keyword>
<gene>
    <name type="primary">urb2</name>
    <name type="ORF">SPAC2G11.02</name>
</gene>
<reference key="1">
    <citation type="journal article" date="2002" name="Nature">
        <title>The genome sequence of Schizosaccharomyces pombe.</title>
        <authorList>
            <person name="Wood V."/>
            <person name="Gwilliam R."/>
            <person name="Rajandream M.A."/>
            <person name="Lyne M.H."/>
            <person name="Lyne R."/>
            <person name="Stewart A."/>
            <person name="Sgouros J.G."/>
            <person name="Peat N."/>
            <person name="Hayles J."/>
            <person name="Baker S.G."/>
            <person name="Basham D."/>
            <person name="Bowman S."/>
            <person name="Brooks K."/>
            <person name="Brown D."/>
            <person name="Brown S."/>
            <person name="Chillingworth T."/>
            <person name="Churcher C.M."/>
            <person name="Collins M."/>
            <person name="Connor R."/>
            <person name="Cronin A."/>
            <person name="Davis P."/>
            <person name="Feltwell T."/>
            <person name="Fraser A."/>
            <person name="Gentles S."/>
            <person name="Goble A."/>
            <person name="Hamlin N."/>
            <person name="Harris D.E."/>
            <person name="Hidalgo J."/>
            <person name="Hodgson G."/>
            <person name="Holroyd S."/>
            <person name="Hornsby T."/>
            <person name="Howarth S."/>
            <person name="Huckle E.J."/>
            <person name="Hunt S."/>
            <person name="Jagels K."/>
            <person name="James K.D."/>
            <person name="Jones L."/>
            <person name="Jones M."/>
            <person name="Leather S."/>
            <person name="McDonald S."/>
            <person name="McLean J."/>
            <person name="Mooney P."/>
            <person name="Moule S."/>
            <person name="Mungall K.L."/>
            <person name="Murphy L.D."/>
            <person name="Niblett D."/>
            <person name="Odell C."/>
            <person name="Oliver K."/>
            <person name="O'Neil S."/>
            <person name="Pearson D."/>
            <person name="Quail M.A."/>
            <person name="Rabbinowitsch E."/>
            <person name="Rutherford K.M."/>
            <person name="Rutter S."/>
            <person name="Saunders D."/>
            <person name="Seeger K."/>
            <person name="Sharp S."/>
            <person name="Skelton J."/>
            <person name="Simmonds M.N."/>
            <person name="Squares R."/>
            <person name="Squares S."/>
            <person name="Stevens K."/>
            <person name="Taylor K."/>
            <person name="Taylor R.G."/>
            <person name="Tivey A."/>
            <person name="Walsh S.V."/>
            <person name="Warren T."/>
            <person name="Whitehead S."/>
            <person name="Woodward J.R."/>
            <person name="Volckaert G."/>
            <person name="Aert R."/>
            <person name="Robben J."/>
            <person name="Grymonprez B."/>
            <person name="Weltjens I."/>
            <person name="Vanstreels E."/>
            <person name="Rieger M."/>
            <person name="Schaefer M."/>
            <person name="Mueller-Auer S."/>
            <person name="Gabel C."/>
            <person name="Fuchs M."/>
            <person name="Duesterhoeft A."/>
            <person name="Fritzc C."/>
            <person name="Holzer E."/>
            <person name="Moestl D."/>
            <person name="Hilbert H."/>
            <person name="Borzym K."/>
            <person name="Langer I."/>
            <person name="Beck A."/>
            <person name="Lehrach H."/>
            <person name="Reinhardt R."/>
            <person name="Pohl T.M."/>
            <person name="Eger P."/>
            <person name="Zimmermann W."/>
            <person name="Wedler H."/>
            <person name="Wambutt R."/>
            <person name="Purnelle B."/>
            <person name="Goffeau A."/>
            <person name="Cadieu E."/>
            <person name="Dreano S."/>
            <person name="Gloux S."/>
            <person name="Lelaure V."/>
            <person name="Mottier S."/>
            <person name="Galibert F."/>
            <person name="Aves S.J."/>
            <person name="Xiang Z."/>
            <person name="Hunt C."/>
            <person name="Moore K."/>
            <person name="Hurst S.M."/>
            <person name="Lucas M."/>
            <person name="Rochet M."/>
            <person name="Gaillardin C."/>
            <person name="Tallada V.A."/>
            <person name="Garzon A."/>
            <person name="Thode G."/>
            <person name="Daga R.R."/>
            <person name="Cruzado L."/>
            <person name="Jimenez J."/>
            <person name="Sanchez M."/>
            <person name="del Rey F."/>
            <person name="Benito J."/>
            <person name="Dominguez A."/>
            <person name="Revuelta J.L."/>
            <person name="Moreno S."/>
            <person name="Armstrong J."/>
            <person name="Forsburg S.L."/>
            <person name="Cerutti L."/>
            <person name="Lowe T."/>
            <person name="McCombie W.R."/>
            <person name="Paulsen I."/>
            <person name="Potashkin J."/>
            <person name="Shpakovski G.V."/>
            <person name="Ussery D."/>
            <person name="Barrell B.G."/>
            <person name="Nurse P."/>
        </authorList>
    </citation>
    <scope>NUCLEOTIDE SEQUENCE [LARGE SCALE GENOMIC DNA]</scope>
    <source>
        <strain>972 / ATCC 24843</strain>
    </source>
</reference>
<reference key="2">
    <citation type="journal article" date="2006" name="Nat. Biotechnol.">
        <title>ORFeome cloning and global analysis of protein localization in the fission yeast Schizosaccharomyces pombe.</title>
        <authorList>
            <person name="Matsuyama A."/>
            <person name="Arai R."/>
            <person name="Yashiroda Y."/>
            <person name="Shirai A."/>
            <person name="Kamata A."/>
            <person name="Sekido S."/>
            <person name="Kobayashi Y."/>
            <person name="Hashimoto A."/>
            <person name="Hamamoto M."/>
            <person name="Hiraoka Y."/>
            <person name="Horinouchi S."/>
            <person name="Yoshida M."/>
        </authorList>
    </citation>
    <scope>SUBCELLULAR LOCATION [LARGE SCALE ANALYSIS]</scope>
</reference>
<dbReference type="EMBL" id="CU329670">
    <property type="protein sequence ID" value="CAA91167.1"/>
    <property type="molecule type" value="Genomic_DNA"/>
</dbReference>
<dbReference type="PIR" id="S62457">
    <property type="entry name" value="S62457"/>
</dbReference>
<dbReference type="PIR" id="T38568">
    <property type="entry name" value="T38568"/>
</dbReference>
<dbReference type="RefSeq" id="NP_593082.1">
    <property type="nucleotide sequence ID" value="NM_001018480.2"/>
</dbReference>
<dbReference type="BioGRID" id="278017">
    <property type="interactions" value="1"/>
</dbReference>
<dbReference type="FunCoup" id="Q09804">
    <property type="interactions" value="88"/>
</dbReference>
<dbReference type="STRING" id="284812.Q09804"/>
<dbReference type="PaxDb" id="4896-SPAC2G11.02.1"/>
<dbReference type="EnsemblFungi" id="SPAC2G11.02.1">
    <property type="protein sequence ID" value="SPAC2G11.02.1:pep"/>
    <property type="gene ID" value="SPAC2G11.02"/>
</dbReference>
<dbReference type="GeneID" id="2541516"/>
<dbReference type="KEGG" id="spo:2541516"/>
<dbReference type="PomBase" id="SPAC2G11.02">
    <property type="gene designation" value="urb2"/>
</dbReference>
<dbReference type="VEuPathDB" id="FungiDB:SPAC2G11.02"/>
<dbReference type="eggNOG" id="ENOG502QTEB">
    <property type="taxonomic scope" value="Eukaryota"/>
</dbReference>
<dbReference type="HOGENOM" id="CLU_260347_0_0_1"/>
<dbReference type="InParanoid" id="Q09804"/>
<dbReference type="OMA" id="LMHDSNK"/>
<dbReference type="PRO" id="PR:Q09804"/>
<dbReference type="Proteomes" id="UP000002485">
    <property type="component" value="Chromosome I"/>
</dbReference>
<dbReference type="GO" id="GO:0005829">
    <property type="term" value="C:cytosol"/>
    <property type="evidence" value="ECO:0007005"/>
    <property type="project" value="PomBase"/>
</dbReference>
<dbReference type="GO" id="GO:0005730">
    <property type="term" value="C:nucleolus"/>
    <property type="evidence" value="ECO:0000318"/>
    <property type="project" value="GO_Central"/>
</dbReference>
<dbReference type="GO" id="GO:0042254">
    <property type="term" value="P:ribosome biogenesis"/>
    <property type="evidence" value="ECO:0000318"/>
    <property type="project" value="GO_Central"/>
</dbReference>
<dbReference type="GO" id="GO:0006364">
    <property type="term" value="P:rRNA processing"/>
    <property type="evidence" value="ECO:0007669"/>
    <property type="project" value="UniProtKB-KW"/>
</dbReference>
<dbReference type="InterPro" id="IPR052609">
    <property type="entry name" value="Ribosome_Biogenesis_Reg"/>
</dbReference>
<dbReference type="InterPro" id="IPR018849">
    <property type="entry name" value="Urb2/Npa2_C"/>
</dbReference>
<dbReference type="PANTHER" id="PTHR15682">
    <property type="entry name" value="UNHEALTHY RIBOSOME BIOGENESIS PROTEIN 2 HOMOLOG"/>
    <property type="match status" value="1"/>
</dbReference>
<dbReference type="PANTHER" id="PTHR15682:SF2">
    <property type="entry name" value="UNHEALTHY RIBOSOME BIOGENESIS PROTEIN 2 HOMOLOG"/>
    <property type="match status" value="1"/>
</dbReference>
<dbReference type="Pfam" id="PF10441">
    <property type="entry name" value="Urb2"/>
    <property type="match status" value="1"/>
</dbReference>
<comment type="function">
    <text evidence="1">Required for 27S pre-rRNA processing. Has an early role during 60S ribosomal subunit assembly (By similarity).</text>
</comment>
<comment type="subcellular location">
    <subcellularLocation>
        <location evidence="2">Cytoplasm</location>
        <location evidence="2">Cytosol</location>
    </subcellularLocation>
    <subcellularLocation>
        <location evidence="1">Nucleus</location>
        <location evidence="1">Nucleolus</location>
    </subcellularLocation>
</comment>
<proteinExistence type="inferred from homology"/>
<protein>
    <recommendedName>
        <fullName>Probable nucleolar pre-ribosomal-associated protein 2</fullName>
    </recommendedName>
    <alternativeName>
        <fullName>Ribosome biogenesis protein urb2</fullName>
    </alternativeName>
</protein>
<name>URB2_SCHPO</name>
<sequence>MSLQTLTKRIRDKNGSREDQIDLANKLFRGEVDVYFPNKEEFIINFLLDRLKENSNLTCVNIGYWQLFLNIWKSDKLSGSFRVSAIRRQSLYPIILNAFEYLIKEFKKDVFLKISDVFVCVYSNLNILYISRSFPDQISLLFSRYCYLIASKIDDLLDSHPNEVFKETLICVIQSAVHSQASSTKAQTQFLHQTLGSILALLCKTQKGDPYFSFLNAVLMKCVLTQHTLDVLLLTKKDSSMTLCSLLNAISFEPINLKAIPLFFIICADSINFHLSSVEKSISQQKASELMYKLFSEHIAFLLSLKNLPEEATLDCMLSICQVFENDNLHRGHSDEYTFAMLEQLLELSVKTLRQNTCWSTSWEMLSSLLAIDFDVLLPHSKILWECIKSVSHQDDIHALKFLKRWVRASAKARILDSFCIDWHLNVQTMSERSILTNRDFITSFSAVAEVSLSQISIKKLVTWLMSSESIMSENSNRFVVYYSLCKSLKRESYPAHLVPNFELFTRSIFNASLKNFNILDERSQALLCMCQISHVQFFSSDMSISASVGMKTLFEDLMAEKSRGLSSTVWSLQLLLCYLEQCLRLNTLHEDTTFPMRVVNYALEYSSKALDKFAENSHLILLDMVDVGKPDLVLTLLCRWLHMVHLYSSRTSITSWIYSIASKFYFIDSLNLETKDSVLESNWERFISSTETYELDSIRDSLIDCLIRLLCYSSNNAIDPVSAPGNLDFDNSAELCSSLTRFTPKNIDFVLKSLIHIPIHSITKNQRTRLLNLLIIHEKLLSDKDNSAHISLRKIIYTLMKTPCSSGFYRDPKIIIDLMQFGKTDLSFHKVHVLIMRSWIQHLDEGNKSEVILKLLQLILADFRELPLETITLIFNALVDSLPTSKHIKNSNDILSSVFTINDMLIDEMTAYLSKKESLCSGTFSCLLACCNSVLRTQNLTSESLNKLHILKVGIEEKAISLKLNELPFLENWILFQCLLSFGGDDFLKVVAYMVYYRRTVGEMSFRVSDFELALSRLSTNDADYAILNILNLLTSNECDEFDYSVLMKVVGVFANYSDCFQRNRHLVHMVLLCCTHVFYNQTLKPATLIDSALDVFLCFVQKTSKFISLDSFNTILTALSTILNLKELECEPKDHANLILKIIQILNGLLFNHRSYMSGRFHVFYSILKSLLYSMVQHDSEMKKIKGIALMNFYKPKKVPIHVVQSFCRLLTTWMNPNLMHDSNKKNSSLTDAERLFVKATTKHFVFLLTDFMSAQTVYQIDIQVKELLTNCFYNVYENLSNHEKQMALVAMNAPSKSLYQKFVNDYLIFAKWNEA</sequence>
<organism>
    <name type="scientific">Schizosaccharomyces pombe (strain 972 / ATCC 24843)</name>
    <name type="common">Fission yeast</name>
    <dbReference type="NCBI Taxonomy" id="284812"/>
    <lineage>
        <taxon>Eukaryota</taxon>
        <taxon>Fungi</taxon>
        <taxon>Dikarya</taxon>
        <taxon>Ascomycota</taxon>
        <taxon>Taphrinomycotina</taxon>
        <taxon>Schizosaccharomycetes</taxon>
        <taxon>Schizosaccharomycetales</taxon>
        <taxon>Schizosaccharomycetaceae</taxon>
        <taxon>Schizosaccharomyces</taxon>
    </lineage>
</organism>
<accession>Q09804</accession>
<feature type="chain" id="PRO_0000116409" description="Probable nucleolar pre-ribosomal-associated protein 2">
    <location>
        <begin position="1"/>
        <end position="1318"/>
    </location>
</feature>